<name>GUAC_LACJO</name>
<reference key="1">
    <citation type="journal article" date="2004" name="Proc. Natl. Acad. Sci. U.S.A.">
        <title>The genome sequence of the probiotic intestinal bacterium Lactobacillus johnsonii NCC 533.</title>
        <authorList>
            <person name="Pridmore R.D."/>
            <person name="Berger B."/>
            <person name="Desiere F."/>
            <person name="Vilanova D."/>
            <person name="Barretto C."/>
            <person name="Pittet A.-C."/>
            <person name="Zwahlen M.-C."/>
            <person name="Rouvet M."/>
            <person name="Altermann E."/>
            <person name="Barrangou R."/>
            <person name="Mollet B."/>
            <person name="Mercenier A."/>
            <person name="Klaenhammer T."/>
            <person name="Arigoni F."/>
            <person name="Schell M.A."/>
        </authorList>
    </citation>
    <scope>NUCLEOTIDE SEQUENCE [LARGE SCALE GENOMIC DNA]</scope>
    <source>
        <strain>CNCM I-1225 / La1 / NCC 533</strain>
    </source>
</reference>
<proteinExistence type="inferred from homology"/>
<keyword id="KW-0521">NADP</keyword>
<keyword id="KW-0560">Oxidoreductase</keyword>
<organism>
    <name type="scientific">Lactobacillus johnsonii (strain CNCM I-12250 / La1 / NCC 533)</name>
    <dbReference type="NCBI Taxonomy" id="257314"/>
    <lineage>
        <taxon>Bacteria</taxon>
        <taxon>Bacillati</taxon>
        <taxon>Bacillota</taxon>
        <taxon>Bacilli</taxon>
        <taxon>Lactobacillales</taxon>
        <taxon>Lactobacillaceae</taxon>
        <taxon>Lactobacillus</taxon>
    </lineage>
</organism>
<protein>
    <recommendedName>
        <fullName evidence="1">GMP reductase</fullName>
        <ecNumber evidence="1">1.7.1.7</ecNumber>
    </recommendedName>
    <alternativeName>
        <fullName evidence="1">Guanosine 5'-monophosphate oxidoreductase</fullName>
        <shortName evidence="1">Guanosine monophosphate reductase</shortName>
    </alternativeName>
</protein>
<accession>P60565</accession>
<sequence>MSNYFSMEAFDYDDIQLVPNKCIIKSRSEADTGVKFGSRTFKIPVVPANMESVIDEDLAIWLAEHGYYYVMHRFYPEKRADFIKMMHDKGLFASISVGIKDSEYDFIDYLAKENIIPEYTTIDVAHGHSDYVIKMIKYIKEKLPDTFLTAGNIATPEAVRELENAGADATKVGVGPGRACITKLKTGFGTGGWQLAALRMCSKAARKPLIADGGIRHNGDIAKSVRFGASMVMIGSLFAGHEESPGNLITIDGKRYKQYWGSASEVQKGAYRNVEGKQMLVPYRGSIKDTLREMQEDLQSSISYAGGKDLSAIRVVDYVIVKSSIFDGDK</sequence>
<dbReference type="EC" id="1.7.1.7" evidence="1"/>
<dbReference type="EMBL" id="AE017198">
    <property type="protein sequence ID" value="AAS08432.1"/>
    <property type="molecule type" value="Genomic_DNA"/>
</dbReference>
<dbReference type="RefSeq" id="WP_011161582.1">
    <property type="nucleotide sequence ID" value="NC_005362.1"/>
</dbReference>
<dbReference type="SMR" id="P60565"/>
<dbReference type="KEGG" id="ljo:LJ_0441"/>
<dbReference type="eggNOG" id="COG0516">
    <property type="taxonomic scope" value="Bacteria"/>
</dbReference>
<dbReference type="HOGENOM" id="CLU_022552_5_0_9"/>
<dbReference type="Proteomes" id="UP000000581">
    <property type="component" value="Chromosome"/>
</dbReference>
<dbReference type="GO" id="GO:0005829">
    <property type="term" value="C:cytosol"/>
    <property type="evidence" value="ECO:0007669"/>
    <property type="project" value="TreeGrafter"/>
</dbReference>
<dbReference type="GO" id="GO:1902560">
    <property type="term" value="C:GMP reductase complex"/>
    <property type="evidence" value="ECO:0007669"/>
    <property type="project" value="InterPro"/>
</dbReference>
<dbReference type="GO" id="GO:0003920">
    <property type="term" value="F:GMP reductase activity"/>
    <property type="evidence" value="ECO:0007669"/>
    <property type="project" value="UniProtKB-UniRule"/>
</dbReference>
<dbReference type="GO" id="GO:0006163">
    <property type="term" value="P:purine nucleotide metabolic process"/>
    <property type="evidence" value="ECO:0007669"/>
    <property type="project" value="UniProtKB-UniRule"/>
</dbReference>
<dbReference type="CDD" id="cd00381">
    <property type="entry name" value="IMPDH"/>
    <property type="match status" value="1"/>
</dbReference>
<dbReference type="FunFam" id="3.20.20.70:FF:000424">
    <property type="entry name" value="Inosine-5'-monophosphate dehydrogenase 2"/>
    <property type="match status" value="1"/>
</dbReference>
<dbReference type="Gene3D" id="3.20.20.70">
    <property type="entry name" value="Aldolase class I"/>
    <property type="match status" value="1"/>
</dbReference>
<dbReference type="HAMAP" id="MF_01511">
    <property type="entry name" value="GMP_reduct_type2"/>
    <property type="match status" value="1"/>
</dbReference>
<dbReference type="InterPro" id="IPR013785">
    <property type="entry name" value="Aldolase_TIM"/>
</dbReference>
<dbReference type="InterPro" id="IPR050139">
    <property type="entry name" value="GMP_reductase"/>
</dbReference>
<dbReference type="InterPro" id="IPR005994">
    <property type="entry name" value="GuaC_type_2"/>
</dbReference>
<dbReference type="InterPro" id="IPR015875">
    <property type="entry name" value="IMP_DH/GMP_Rdtase_CS"/>
</dbReference>
<dbReference type="InterPro" id="IPR001093">
    <property type="entry name" value="IMP_DH_GMPRt"/>
</dbReference>
<dbReference type="NCBIfam" id="TIGR01306">
    <property type="entry name" value="GMP_reduct_2"/>
    <property type="match status" value="1"/>
</dbReference>
<dbReference type="NCBIfam" id="NF003966">
    <property type="entry name" value="PRK05458.1"/>
    <property type="match status" value="1"/>
</dbReference>
<dbReference type="PANTHER" id="PTHR43170">
    <property type="entry name" value="GMP REDUCTASE"/>
    <property type="match status" value="1"/>
</dbReference>
<dbReference type="PANTHER" id="PTHR43170:SF5">
    <property type="entry name" value="GMP REDUCTASE"/>
    <property type="match status" value="1"/>
</dbReference>
<dbReference type="Pfam" id="PF00478">
    <property type="entry name" value="IMPDH"/>
    <property type="match status" value="1"/>
</dbReference>
<dbReference type="PIRSF" id="PIRSF036500">
    <property type="entry name" value="GMP_red_Firmic"/>
    <property type="match status" value="1"/>
</dbReference>
<dbReference type="SMART" id="SM01240">
    <property type="entry name" value="IMPDH"/>
    <property type="match status" value="1"/>
</dbReference>
<dbReference type="SUPFAM" id="SSF51412">
    <property type="entry name" value="Inosine monophosphate dehydrogenase (IMPDH)"/>
    <property type="match status" value="1"/>
</dbReference>
<dbReference type="PROSITE" id="PS00487">
    <property type="entry name" value="IMP_DH_GMP_RED"/>
    <property type="match status" value="1"/>
</dbReference>
<comment type="function">
    <text evidence="1">Catalyzes the irreversible NADPH-dependent deamination of GMP to IMP. It functions in the conversion of nucleobase, nucleoside and nucleotide derivatives of G to A nucleotides, and in maintaining the intracellular balance of A and G nucleotides.</text>
</comment>
<comment type="catalytic activity">
    <reaction evidence="1">
        <text>IMP + NH4(+) + NADP(+) = GMP + NADPH + 2 H(+)</text>
        <dbReference type="Rhea" id="RHEA:17185"/>
        <dbReference type="ChEBI" id="CHEBI:15378"/>
        <dbReference type="ChEBI" id="CHEBI:28938"/>
        <dbReference type="ChEBI" id="CHEBI:57783"/>
        <dbReference type="ChEBI" id="CHEBI:58053"/>
        <dbReference type="ChEBI" id="CHEBI:58115"/>
        <dbReference type="ChEBI" id="CHEBI:58349"/>
        <dbReference type="EC" id="1.7.1.7"/>
    </reaction>
</comment>
<comment type="similarity">
    <text evidence="1">Belongs to the IMPDH/GMPR family. GuaC type 2 subfamily.</text>
</comment>
<feature type="chain" id="PRO_0000093759" description="GMP reductase">
    <location>
        <begin position="1"/>
        <end position="330"/>
    </location>
</feature>
<feature type="active site" description="Thioimidate intermediate" evidence="1">
    <location>
        <position position="180"/>
    </location>
</feature>
<feature type="binding site" evidence="1">
    <location>
        <begin position="209"/>
        <end position="232"/>
    </location>
    <ligand>
        <name>NADP(+)</name>
        <dbReference type="ChEBI" id="CHEBI:58349"/>
    </ligand>
</feature>
<gene>
    <name evidence="1" type="primary">guaC</name>
    <name type="ordered locus">LJ_0441</name>
</gene>
<evidence type="ECO:0000255" key="1">
    <source>
        <dbReference type="HAMAP-Rule" id="MF_01511"/>
    </source>
</evidence>